<dbReference type="EC" id="4.1.1.20" evidence="1 2"/>
<dbReference type="EMBL" id="EU056336">
    <property type="protein sequence ID" value="ABW70801.1"/>
    <property type="molecule type" value="Genomic_DNA"/>
</dbReference>
<dbReference type="RefSeq" id="WP_077231782.1">
    <property type="nucleotide sequence ID" value="NZ_CP109885.1"/>
</dbReference>
<dbReference type="PDB" id="2QGH">
    <property type="method" value="X-ray"/>
    <property type="resolution" value="2.30 A"/>
    <property type="chains" value="A=1-405"/>
</dbReference>
<dbReference type="PDB" id="3C5Q">
    <property type="method" value="X-ray"/>
    <property type="resolution" value="2.40 A"/>
    <property type="chains" value="A=1-405"/>
</dbReference>
<dbReference type="PDBsum" id="2QGH"/>
<dbReference type="PDBsum" id="3C5Q"/>
<dbReference type="SMR" id="B4XMC6"/>
<dbReference type="eggNOG" id="COG0019">
    <property type="taxonomic scope" value="Bacteria"/>
</dbReference>
<dbReference type="UniPathway" id="UPA00034">
    <property type="reaction ID" value="UER00027"/>
</dbReference>
<dbReference type="EvolutionaryTrace" id="B4XMC6"/>
<dbReference type="GO" id="GO:0008836">
    <property type="term" value="F:diaminopimelate decarboxylase activity"/>
    <property type="evidence" value="ECO:0007669"/>
    <property type="project" value="UniProtKB-UniRule"/>
</dbReference>
<dbReference type="GO" id="GO:0030170">
    <property type="term" value="F:pyridoxal phosphate binding"/>
    <property type="evidence" value="ECO:0007669"/>
    <property type="project" value="UniProtKB-UniRule"/>
</dbReference>
<dbReference type="GO" id="GO:0009089">
    <property type="term" value="P:lysine biosynthetic process via diaminopimelate"/>
    <property type="evidence" value="ECO:0007669"/>
    <property type="project" value="UniProtKB-UniRule"/>
</dbReference>
<dbReference type="CDD" id="cd06828">
    <property type="entry name" value="PLPDE_III_DapDC"/>
    <property type="match status" value="1"/>
</dbReference>
<dbReference type="FunFam" id="2.40.37.10:FF:000019">
    <property type="entry name" value="Diaminopimelate decarboxylase"/>
    <property type="match status" value="1"/>
</dbReference>
<dbReference type="FunFam" id="3.20.20.10:FF:000003">
    <property type="entry name" value="Diaminopimelate decarboxylase"/>
    <property type="match status" value="1"/>
</dbReference>
<dbReference type="Gene3D" id="3.20.20.10">
    <property type="entry name" value="Alanine racemase"/>
    <property type="match status" value="1"/>
</dbReference>
<dbReference type="Gene3D" id="2.40.37.10">
    <property type="entry name" value="Lyase, Ornithine Decarboxylase, Chain A, domain 1"/>
    <property type="match status" value="1"/>
</dbReference>
<dbReference type="HAMAP" id="MF_02120">
    <property type="entry name" value="LysA"/>
    <property type="match status" value="1"/>
</dbReference>
<dbReference type="InterPro" id="IPR009006">
    <property type="entry name" value="Ala_racemase/Decarboxylase_C"/>
</dbReference>
<dbReference type="InterPro" id="IPR002986">
    <property type="entry name" value="DAP_deCOOHase_LysA"/>
</dbReference>
<dbReference type="InterPro" id="IPR022643">
    <property type="entry name" value="De-COase2_C"/>
</dbReference>
<dbReference type="InterPro" id="IPR022644">
    <property type="entry name" value="De-COase2_N"/>
</dbReference>
<dbReference type="InterPro" id="IPR022653">
    <property type="entry name" value="De-COase2_pyr-phos_BS"/>
</dbReference>
<dbReference type="InterPro" id="IPR000183">
    <property type="entry name" value="Orn/DAP/Arg_de-COase"/>
</dbReference>
<dbReference type="InterPro" id="IPR029066">
    <property type="entry name" value="PLP-binding_barrel"/>
</dbReference>
<dbReference type="NCBIfam" id="TIGR01048">
    <property type="entry name" value="lysA"/>
    <property type="match status" value="1"/>
</dbReference>
<dbReference type="PANTHER" id="PTHR43727">
    <property type="entry name" value="DIAMINOPIMELATE DECARBOXYLASE"/>
    <property type="match status" value="1"/>
</dbReference>
<dbReference type="PANTHER" id="PTHR43727:SF2">
    <property type="entry name" value="GROUP IV DECARBOXYLASE"/>
    <property type="match status" value="1"/>
</dbReference>
<dbReference type="Pfam" id="PF02784">
    <property type="entry name" value="Orn_Arg_deC_N"/>
    <property type="match status" value="1"/>
</dbReference>
<dbReference type="Pfam" id="PF00278">
    <property type="entry name" value="Orn_DAP_Arg_deC"/>
    <property type="match status" value="1"/>
</dbReference>
<dbReference type="PRINTS" id="PR01181">
    <property type="entry name" value="DAPDCRBXLASE"/>
</dbReference>
<dbReference type="PRINTS" id="PR01179">
    <property type="entry name" value="ODADCRBXLASE"/>
</dbReference>
<dbReference type="SUPFAM" id="SSF50621">
    <property type="entry name" value="Alanine racemase C-terminal domain-like"/>
    <property type="match status" value="1"/>
</dbReference>
<dbReference type="SUPFAM" id="SSF51419">
    <property type="entry name" value="PLP-binding barrel"/>
    <property type="match status" value="1"/>
</dbReference>
<dbReference type="PROSITE" id="PS00878">
    <property type="entry name" value="ODR_DC_2_1"/>
    <property type="match status" value="1"/>
</dbReference>
<evidence type="ECO:0000255" key="1">
    <source>
        <dbReference type="HAMAP-Rule" id="MF_02120"/>
    </source>
</evidence>
<evidence type="ECO:0000269" key="2">
    <source>
    </source>
</evidence>
<evidence type="ECO:0000303" key="3">
    <source>
    </source>
</evidence>
<evidence type="ECO:0000305" key="4">
    <source>
    </source>
</evidence>
<evidence type="ECO:0007829" key="5">
    <source>
        <dbReference type="PDB" id="2QGH"/>
    </source>
</evidence>
<comment type="function">
    <text evidence="1 2">Specifically catalyzes the decarboxylation of meso-diaminopimelate (meso-DAP) to L-lysine.</text>
</comment>
<comment type="catalytic activity">
    <reaction evidence="1 2">
        <text>meso-2,6-diaminopimelate + H(+) = L-lysine + CO2</text>
        <dbReference type="Rhea" id="RHEA:15101"/>
        <dbReference type="ChEBI" id="CHEBI:15378"/>
        <dbReference type="ChEBI" id="CHEBI:16526"/>
        <dbReference type="ChEBI" id="CHEBI:32551"/>
        <dbReference type="ChEBI" id="CHEBI:57791"/>
        <dbReference type="EC" id="4.1.1.20"/>
    </reaction>
</comment>
<comment type="cofactor">
    <cofactor evidence="1 2">
        <name>pyridoxal 5'-phosphate</name>
        <dbReference type="ChEBI" id="CHEBI:597326"/>
    </cofactor>
</comment>
<comment type="biophysicochemical properties">
    <kinetics>
        <KM evidence="2">0.39 mM for meso-2,6-diaminoheptanedioate</KM>
        <text evidence="2">kcat is 939 min(-1).</text>
    </kinetics>
</comment>
<comment type="pathway">
    <text evidence="1">Amino-acid biosynthesis; L-lysine biosynthesis via DAP pathway; L-lysine from DL-2,6-diaminopimelate: step 1/1.</text>
</comment>
<comment type="subunit">
    <text evidence="1 4">Homodimer.</text>
</comment>
<comment type="miscellaneous">
    <text evidence="4">May adopt an induced-fit catalytic mechanism, in which the active site loop (residues 137-155) cycles through down and up conformations to stabilize catalytic intermediates and release reaction products, respectively.</text>
</comment>
<comment type="similarity">
    <text evidence="1">Belongs to the Orn/Lys/Arg decarboxylase class-II family. LysA subfamily.</text>
</comment>
<accession>B4XMC6</accession>
<reference key="1">
    <citation type="journal article" date="2008" name="J. Biol. Chem.">
        <title>The catalytic intermediate stabilized by a 'down' active site loop for diaminopimelate decarboxylase from Helicobacter pylori. Enzymatic characterization with crystal structure analysis.</title>
        <authorList>
            <person name="Hu T."/>
            <person name="Wu D."/>
            <person name="Chen J."/>
            <person name="Ding J."/>
            <person name="Jiang H."/>
            <person name="Shen X."/>
        </authorList>
    </citation>
    <scope>NUCLEOTIDE SEQUENCE [GENOMIC DNA]</scope>
    <scope>X-RAY CRYSTALLOGRAPHY (2.3 ANGSTROMS) OF WILD-TYPE AND MUTANT LEU-148 IN COMPLEX WITH PLP AND LYSINE</scope>
    <scope>FUNCTION</scope>
    <scope>CATALYTIC ACTIVITY</scope>
    <scope>KINETIC PARAMETERS</scope>
    <scope>COFACTOR</scope>
    <scope>SUBUNIT</scope>
    <scope>CATALYTIC MECHANISM</scope>
    <scope>ACTIVE SITE</scope>
    <scope>MUTAGENESIS OF ILE-148</scope>
    <source>
        <strain>SS1</strain>
    </source>
</reference>
<proteinExistence type="evidence at protein level"/>
<protein>
    <recommendedName>
        <fullName evidence="1 3">Diaminopimelate decarboxylase</fullName>
        <shortName evidence="1">DAP decarboxylase</shortName>
        <shortName evidence="1">DAPDC</shortName>
        <ecNumber evidence="1 2">4.1.1.20</ecNumber>
    </recommendedName>
</protein>
<feature type="chain" id="PRO_0000411130" description="Diaminopimelate decarboxylase">
    <location>
        <begin position="1"/>
        <end position="405"/>
    </location>
</feature>
<feature type="active site" description="Proton donor" evidence="1">
    <location>
        <position position="329"/>
    </location>
</feature>
<feature type="binding site" evidence="2">
    <location>
        <position position="225"/>
    </location>
    <ligand>
        <name>pyridoxal 5'-phosphate</name>
        <dbReference type="ChEBI" id="CHEBI:597326"/>
    </ligand>
</feature>
<feature type="binding site" evidence="1 2">
    <location>
        <begin position="259"/>
        <end position="262"/>
    </location>
    <ligand>
        <name>pyridoxal 5'-phosphate</name>
        <dbReference type="ChEBI" id="CHEBI:597326"/>
    </ligand>
</feature>
<feature type="binding site" evidence="4">
    <location>
        <position position="262"/>
    </location>
    <ligand>
        <name>substrate</name>
    </ligand>
</feature>
<feature type="binding site" evidence="4">
    <location>
        <position position="298"/>
    </location>
    <ligand>
        <name>substrate</name>
    </ligand>
</feature>
<feature type="binding site" evidence="4">
    <location>
        <position position="302"/>
    </location>
    <ligand>
        <name>substrate</name>
    </ligand>
</feature>
<feature type="binding site" evidence="4">
    <location>
        <position position="330"/>
    </location>
    <ligand>
        <name>substrate</name>
    </ligand>
</feature>
<feature type="binding site" evidence="2">
    <location>
        <position position="358"/>
    </location>
    <ligand>
        <name>pyridoxal 5'-phosphate</name>
        <dbReference type="ChEBI" id="CHEBI:597326"/>
    </ligand>
</feature>
<feature type="binding site" evidence="4">
    <location>
        <position position="358"/>
    </location>
    <ligand>
        <name>substrate</name>
    </ligand>
</feature>
<feature type="modified residue" description="N6-(pyridoxal phosphate)lysine" evidence="2">
    <location>
        <position position="46"/>
    </location>
</feature>
<feature type="mutagenesis site" description="Nearly no change in substrate affinity and 47-fold decrease in catalytic activity." evidence="2">
    <original>I</original>
    <variation>A</variation>
    <location>
        <position position="148"/>
    </location>
</feature>
<feature type="mutagenesis site" description="2-fold decrease in substrate affinity and 235-fold decrease in catalytic activity." evidence="2">
    <original>I</original>
    <variation>D</variation>
    <location>
        <position position="148"/>
    </location>
</feature>
<feature type="mutagenesis site" description="4-fold increase in substrate affinity and 23-fold decrease in catalytic activity." evidence="2">
    <original>I</original>
    <variation>F</variation>
    <location>
        <position position="148"/>
    </location>
</feature>
<feature type="mutagenesis site" description="Nearly no change in substrate affinity and 235-fold decrease in catalytic activity." evidence="2">
    <original>I</original>
    <variation>G</variation>
    <location>
        <position position="148"/>
    </location>
</feature>
<feature type="mutagenesis site" description="Nearly no change in substrate affinity and 55-fold decrease in catalytic activity." evidence="2">
    <original>I</original>
    <variation>K</variation>
    <location>
        <position position="148"/>
    </location>
</feature>
<feature type="mutagenesis site" description="13-fold increase in substrate affinity and 40-fold decrease in catalytic activity." evidence="2">
    <original>I</original>
    <variation>L</variation>
    <location>
        <position position="148"/>
    </location>
</feature>
<feature type="helix" evidence="5">
    <location>
        <begin position="4"/>
        <end position="10"/>
    </location>
</feature>
<feature type="strand" evidence="5">
    <location>
        <begin position="13"/>
        <end position="19"/>
    </location>
</feature>
<feature type="helix" evidence="5">
    <location>
        <begin position="20"/>
        <end position="32"/>
    </location>
</feature>
<feature type="strand" evidence="5">
    <location>
        <begin position="39"/>
        <end position="44"/>
    </location>
</feature>
<feature type="helix" evidence="5">
    <location>
        <begin position="45"/>
        <end position="47"/>
    </location>
</feature>
<feature type="helix" evidence="5">
    <location>
        <begin position="51"/>
        <end position="59"/>
    </location>
</feature>
<feature type="strand" evidence="5">
    <location>
        <begin position="63"/>
        <end position="68"/>
    </location>
</feature>
<feature type="helix" evidence="5">
    <location>
        <begin position="69"/>
        <end position="77"/>
    </location>
</feature>
<feature type="helix" evidence="5">
    <location>
        <begin position="82"/>
        <end position="84"/>
    </location>
</feature>
<feature type="strand" evidence="5">
    <location>
        <begin position="85"/>
        <end position="87"/>
    </location>
</feature>
<feature type="helix" evidence="5">
    <location>
        <begin position="94"/>
        <end position="102"/>
    </location>
</feature>
<feature type="strand" evidence="5">
    <location>
        <begin position="106"/>
        <end position="110"/>
    </location>
</feature>
<feature type="helix" evidence="5">
    <location>
        <begin position="113"/>
        <end position="126"/>
    </location>
</feature>
<feature type="strand" evidence="5">
    <location>
        <begin position="130"/>
        <end position="136"/>
    </location>
</feature>
<feature type="helix" evidence="5">
    <location>
        <begin position="146"/>
        <end position="148"/>
    </location>
</feature>
<feature type="strand" evidence="5">
    <location>
        <begin position="155"/>
        <end position="159"/>
    </location>
</feature>
<feature type="helix" evidence="5">
    <location>
        <begin position="161"/>
        <end position="173"/>
    </location>
</feature>
<feature type="strand" evidence="5">
    <location>
        <begin position="175"/>
        <end position="183"/>
    </location>
</feature>
<feature type="strand" evidence="5">
    <location>
        <begin position="187"/>
        <end position="190"/>
    </location>
</feature>
<feature type="helix" evidence="5">
    <location>
        <begin position="193"/>
        <end position="212"/>
    </location>
</feature>
<feature type="strand" evidence="5">
    <location>
        <begin position="219"/>
        <end position="221"/>
    </location>
</feature>
<feature type="helix" evidence="5">
    <location>
        <begin position="238"/>
        <end position="248"/>
    </location>
</feature>
<feature type="turn" evidence="5">
    <location>
        <begin position="249"/>
        <end position="251"/>
    </location>
</feature>
<feature type="strand" evidence="5">
    <location>
        <begin position="255"/>
        <end position="258"/>
    </location>
</feature>
<feature type="helix" evidence="5">
    <location>
        <begin position="262"/>
        <end position="265"/>
    </location>
</feature>
<feature type="turn" evidence="5">
    <location>
        <begin position="266"/>
        <end position="268"/>
    </location>
</feature>
<feature type="strand" evidence="5">
    <location>
        <begin position="269"/>
        <end position="279"/>
    </location>
</feature>
<feature type="strand" evidence="5">
    <location>
        <begin position="286"/>
        <end position="290"/>
    </location>
</feature>
<feature type="turn" evidence="5">
    <location>
        <begin position="293"/>
        <end position="295"/>
    </location>
</feature>
<feature type="helix" evidence="5">
    <location>
        <begin position="298"/>
        <end position="302"/>
    </location>
</feature>
<feature type="strand" evidence="5">
    <location>
        <begin position="308"/>
        <end position="310"/>
    </location>
</feature>
<feature type="strand" evidence="5">
    <location>
        <begin position="320"/>
        <end position="325"/>
    </location>
</feature>
<feature type="strand" evidence="5">
    <location>
        <begin position="327"/>
        <end position="330"/>
    </location>
</feature>
<feature type="strand" evidence="5">
    <location>
        <begin position="334"/>
        <end position="341"/>
    </location>
</feature>
<feature type="strand" evidence="5">
    <location>
        <begin position="349"/>
        <end position="352"/>
    </location>
</feature>
<feature type="strand" evidence="5">
    <location>
        <begin position="356"/>
        <end position="359"/>
    </location>
</feature>
<feature type="helix" evidence="5">
    <location>
        <begin position="360"/>
        <end position="362"/>
    </location>
</feature>
<feature type="turn" evidence="5">
    <location>
        <begin position="366"/>
        <end position="368"/>
    </location>
</feature>
<feature type="strand" evidence="5">
    <location>
        <begin position="373"/>
        <end position="377"/>
    </location>
</feature>
<feature type="strand" evidence="5">
    <location>
        <begin position="382"/>
        <end position="386"/>
    </location>
</feature>
<feature type="helix" evidence="5">
    <location>
        <begin position="391"/>
        <end position="394"/>
    </location>
</feature>
<feature type="helix" evidence="5">
    <location>
        <begin position="396"/>
        <end position="398"/>
    </location>
</feature>
<feature type="turn" evidence="5">
    <location>
        <begin position="399"/>
        <end position="401"/>
    </location>
</feature>
<keyword id="KW-0002">3D-structure</keyword>
<keyword id="KW-0028">Amino-acid biosynthesis</keyword>
<keyword id="KW-0210">Decarboxylase</keyword>
<keyword id="KW-0456">Lyase</keyword>
<keyword id="KW-0457">Lysine biosynthesis</keyword>
<keyword id="KW-0663">Pyridoxal phosphate</keyword>
<sequence length="405" mass="45242">MFNYEELFQTHKTPFYLYDFDKIKQAFLNYKEAFKGRKSLICYALKANSNLSILSLLAHLESGADCVSIGEIQRALKAGIKPYRIVFSGVGKSAFEIEQALKLNILFLNVESFMELKTIETIAQSLGIKARISIRINPNIDAKTHPYISTGLKENKFGVGEKEALEMFLWAKKSAFLEPVSVHFHIGSQLLDLEPIIEASQKVAKIAKSLIALGIDLRFFDVGGGIGVSYENEETIKLYDYAQGILNALQGLDLTIICEPGRSIVAESGELITQVLYEKKAQNKRFVIVDAGMNDFLRPSLYHAKHAIRVITPSKGREISPCDVVGPVCESSDTFLKDAHLPELEPGDKIAIEKVGAYGSSMASQYNSRPKLLELALEDHKIRVIRKREALEDLWRLEEEGLKGV</sequence>
<name>DCDA_HELPX</name>
<gene>
    <name evidence="1" type="primary">lysA</name>
</gene>
<organism>
    <name type="scientific">Helicobacter pylori</name>
    <name type="common">Campylobacter pylori</name>
    <dbReference type="NCBI Taxonomy" id="210"/>
    <lineage>
        <taxon>Bacteria</taxon>
        <taxon>Pseudomonadati</taxon>
        <taxon>Campylobacterota</taxon>
        <taxon>Epsilonproteobacteria</taxon>
        <taxon>Campylobacterales</taxon>
        <taxon>Helicobacteraceae</taxon>
        <taxon>Helicobacter</taxon>
    </lineage>
</organism>